<gene>
    <name evidence="1" type="primary">rlmN</name>
    <name type="ordered locus">Caul_0185</name>
</gene>
<dbReference type="EC" id="2.1.1.192" evidence="1"/>
<dbReference type="EMBL" id="CP000927">
    <property type="protein sequence ID" value="ABZ69322.1"/>
    <property type="molecule type" value="Genomic_DNA"/>
</dbReference>
<dbReference type="SMR" id="B0T387"/>
<dbReference type="STRING" id="366602.Caul_0185"/>
<dbReference type="KEGG" id="cak:Caul_0185"/>
<dbReference type="eggNOG" id="COG0820">
    <property type="taxonomic scope" value="Bacteria"/>
</dbReference>
<dbReference type="HOGENOM" id="CLU_029101_0_0_5"/>
<dbReference type="OrthoDB" id="9793973at2"/>
<dbReference type="GO" id="GO:0005737">
    <property type="term" value="C:cytoplasm"/>
    <property type="evidence" value="ECO:0007669"/>
    <property type="project" value="UniProtKB-SubCell"/>
</dbReference>
<dbReference type="GO" id="GO:0051539">
    <property type="term" value="F:4 iron, 4 sulfur cluster binding"/>
    <property type="evidence" value="ECO:0007669"/>
    <property type="project" value="UniProtKB-UniRule"/>
</dbReference>
<dbReference type="GO" id="GO:0046872">
    <property type="term" value="F:metal ion binding"/>
    <property type="evidence" value="ECO:0007669"/>
    <property type="project" value="UniProtKB-KW"/>
</dbReference>
<dbReference type="GO" id="GO:0070040">
    <property type="term" value="F:rRNA (adenine(2503)-C2-)-methyltransferase activity"/>
    <property type="evidence" value="ECO:0007669"/>
    <property type="project" value="UniProtKB-UniRule"/>
</dbReference>
<dbReference type="GO" id="GO:0019843">
    <property type="term" value="F:rRNA binding"/>
    <property type="evidence" value="ECO:0007669"/>
    <property type="project" value="UniProtKB-UniRule"/>
</dbReference>
<dbReference type="GO" id="GO:0002935">
    <property type="term" value="F:tRNA (adenine(37)-C2)-methyltransferase activity"/>
    <property type="evidence" value="ECO:0007669"/>
    <property type="project" value="UniProtKB-UniRule"/>
</dbReference>
<dbReference type="GO" id="GO:0000049">
    <property type="term" value="F:tRNA binding"/>
    <property type="evidence" value="ECO:0007669"/>
    <property type="project" value="UniProtKB-UniRule"/>
</dbReference>
<dbReference type="GO" id="GO:0070475">
    <property type="term" value="P:rRNA base methylation"/>
    <property type="evidence" value="ECO:0007669"/>
    <property type="project" value="UniProtKB-UniRule"/>
</dbReference>
<dbReference type="GO" id="GO:0030488">
    <property type="term" value="P:tRNA methylation"/>
    <property type="evidence" value="ECO:0007669"/>
    <property type="project" value="UniProtKB-UniRule"/>
</dbReference>
<dbReference type="CDD" id="cd01335">
    <property type="entry name" value="Radical_SAM"/>
    <property type="match status" value="1"/>
</dbReference>
<dbReference type="FunFam" id="3.20.20.70:FF:000008">
    <property type="entry name" value="Dual-specificity RNA methyltransferase RlmN"/>
    <property type="match status" value="1"/>
</dbReference>
<dbReference type="Gene3D" id="1.10.150.530">
    <property type="match status" value="1"/>
</dbReference>
<dbReference type="Gene3D" id="3.20.20.70">
    <property type="entry name" value="Aldolase class I"/>
    <property type="match status" value="1"/>
</dbReference>
<dbReference type="HAMAP" id="MF_01849">
    <property type="entry name" value="RNA_methyltr_RlmN"/>
    <property type="match status" value="1"/>
</dbReference>
<dbReference type="InterPro" id="IPR013785">
    <property type="entry name" value="Aldolase_TIM"/>
</dbReference>
<dbReference type="InterPro" id="IPR040072">
    <property type="entry name" value="Methyltransferase_A"/>
</dbReference>
<dbReference type="InterPro" id="IPR048641">
    <property type="entry name" value="RlmN_N"/>
</dbReference>
<dbReference type="InterPro" id="IPR027492">
    <property type="entry name" value="RNA_MTrfase_RlmN"/>
</dbReference>
<dbReference type="InterPro" id="IPR004383">
    <property type="entry name" value="rRNA_lsu_MTrfase_RlmN/Cfr"/>
</dbReference>
<dbReference type="InterPro" id="IPR007197">
    <property type="entry name" value="rSAM"/>
</dbReference>
<dbReference type="NCBIfam" id="TIGR00048">
    <property type="entry name" value="rRNA_mod_RlmN"/>
    <property type="match status" value="1"/>
</dbReference>
<dbReference type="PANTHER" id="PTHR30544">
    <property type="entry name" value="23S RRNA METHYLTRANSFERASE"/>
    <property type="match status" value="1"/>
</dbReference>
<dbReference type="PANTHER" id="PTHR30544:SF5">
    <property type="entry name" value="RADICAL SAM CORE DOMAIN-CONTAINING PROTEIN"/>
    <property type="match status" value="1"/>
</dbReference>
<dbReference type="Pfam" id="PF04055">
    <property type="entry name" value="Radical_SAM"/>
    <property type="match status" value="1"/>
</dbReference>
<dbReference type="Pfam" id="PF21016">
    <property type="entry name" value="RlmN_N"/>
    <property type="match status" value="1"/>
</dbReference>
<dbReference type="PIRSF" id="PIRSF006004">
    <property type="entry name" value="CHP00048"/>
    <property type="match status" value="1"/>
</dbReference>
<dbReference type="SFLD" id="SFLDF00275">
    <property type="entry name" value="adenosine_C2_methyltransferase"/>
    <property type="match status" value="1"/>
</dbReference>
<dbReference type="SFLD" id="SFLDS00029">
    <property type="entry name" value="Radical_SAM"/>
    <property type="match status" value="1"/>
</dbReference>
<dbReference type="SUPFAM" id="SSF102114">
    <property type="entry name" value="Radical SAM enzymes"/>
    <property type="match status" value="1"/>
</dbReference>
<dbReference type="PROSITE" id="PS51918">
    <property type="entry name" value="RADICAL_SAM"/>
    <property type="match status" value="1"/>
</dbReference>
<reference key="1">
    <citation type="submission" date="2008-01" db="EMBL/GenBank/DDBJ databases">
        <title>Complete sequence of chromosome of Caulobacter sp. K31.</title>
        <authorList>
            <consortium name="US DOE Joint Genome Institute"/>
            <person name="Copeland A."/>
            <person name="Lucas S."/>
            <person name="Lapidus A."/>
            <person name="Barry K."/>
            <person name="Glavina del Rio T."/>
            <person name="Dalin E."/>
            <person name="Tice H."/>
            <person name="Pitluck S."/>
            <person name="Bruce D."/>
            <person name="Goodwin L."/>
            <person name="Thompson L.S."/>
            <person name="Brettin T."/>
            <person name="Detter J.C."/>
            <person name="Han C."/>
            <person name="Schmutz J."/>
            <person name="Larimer F."/>
            <person name="Land M."/>
            <person name="Hauser L."/>
            <person name="Kyrpides N."/>
            <person name="Kim E."/>
            <person name="Stephens C."/>
            <person name="Richardson P."/>
        </authorList>
    </citation>
    <scope>NUCLEOTIDE SEQUENCE [LARGE SCALE GENOMIC DNA]</scope>
    <source>
        <strain>K31</strain>
    </source>
</reference>
<keyword id="KW-0004">4Fe-4S</keyword>
<keyword id="KW-0963">Cytoplasm</keyword>
<keyword id="KW-1015">Disulfide bond</keyword>
<keyword id="KW-0408">Iron</keyword>
<keyword id="KW-0411">Iron-sulfur</keyword>
<keyword id="KW-0479">Metal-binding</keyword>
<keyword id="KW-0489">Methyltransferase</keyword>
<keyword id="KW-0698">rRNA processing</keyword>
<keyword id="KW-0949">S-adenosyl-L-methionine</keyword>
<keyword id="KW-0808">Transferase</keyword>
<keyword id="KW-0819">tRNA processing</keyword>
<protein>
    <recommendedName>
        <fullName evidence="1">Dual-specificity RNA methyltransferase RlmN</fullName>
        <ecNumber evidence="1">2.1.1.192</ecNumber>
    </recommendedName>
    <alternativeName>
        <fullName evidence="1">23S rRNA (adenine(2503)-C(2))-methyltransferase</fullName>
    </alternativeName>
    <alternativeName>
        <fullName evidence="1">23S rRNA m2A2503 methyltransferase</fullName>
    </alternativeName>
    <alternativeName>
        <fullName evidence="1">Ribosomal RNA large subunit methyltransferase N</fullName>
    </alternativeName>
    <alternativeName>
        <fullName evidence="1">tRNA (adenine(37)-C(2))-methyltransferase</fullName>
    </alternativeName>
    <alternativeName>
        <fullName evidence="1">tRNA m2A37 methyltransferase</fullName>
    </alternativeName>
</protein>
<sequence length="404" mass="43746">MSVTLDLSRMAPSMSKEGGDAPKALINLSGLTRAQLLVALTESGVAEHGKAKMRATQIFRWMHHRGVTDFALMTDVAKETRARLAERFTVSRPEVVERQVSKDGTRKWLIRMAPGIEVETVYIPSVGRAGALCVSSQVGCTLNCSFCHTGTQALVRNLTAAEIVAQVQIAKDDLAEWPSDKEDRLLSNIVFMGMGEPLYNLGHVADAIEIISDNEGIGISRRRITVSTSGVVPQLEALGDKTQAMLAISLHATNDALRDVLVPLNKKYPLEDLMAGVRAYPGLSNARRVTFEYVMLKGVNDSPDEARALVKLIKGIPAKINLIPFNPWPGTDYVCSDWAAIEAFGAILNKAGYSSPIRTPRGRDILAACGQLKSESEKVRASAMRKLSMAAMAGVLDDDDEAAA</sequence>
<evidence type="ECO:0000255" key="1">
    <source>
        <dbReference type="HAMAP-Rule" id="MF_01849"/>
    </source>
</evidence>
<evidence type="ECO:0000255" key="2">
    <source>
        <dbReference type="PROSITE-ProRule" id="PRU01266"/>
    </source>
</evidence>
<proteinExistence type="inferred from homology"/>
<comment type="function">
    <text evidence="1">Specifically methylates position 2 of adenine 2503 in 23S rRNA and position 2 of adenine 37 in tRNAs. m2A2503 modification seems to play a crucial role in the proofreading step occurring at the peptidyl transferase center and thus would serve to optimize ribosomal fidelity.</text>
</comment>
<comment type="catalytic activity">
    <reaction evidence="1">
        <text>adenosine(2503) in 23S rRNA + 2 reduced [2Fe-2S]-[ferredoxin] + 2 S-adenosyl-L-methionine = 2-methyladenosine(2503) in 23S rRNA + 5'-deoxyadenosine + L-methionine + 2 oxidized [2Fe-2S]-[ferredoxin] + S-adenosyl-L-homocysteine</text>
        <dbReference type="Rhea" id="RHEA:42916"/>
        <dbReference type="Rhea" id="RHEA-COMP:10000"/>
        <dbReference type="Rhea" id="RHEA-COMP:10001"/>
        <dbReference type="Rhea" id="RHEA-COMP:10152"/>
        <dbReference type="Rhea" id="RHEA-COMP:10282"/>
        <dbReference type="ChEBI" id="CHEBI:17319"/>
        <dbReference type="ChEBI" id="CHEBI:33737"/>
        <dbReference type="ChEBI" id="CHEBI:33738"/>
        <dbReference type="ChEBI" id="CHEBI:57844"/>
        <dbReference type="ChEBI" id="CHEBI:57856"/>
        <dbReference type="ChEBI" id="CHEBI:59789"/>
        <dbReference type="ChEBI" id="CHEBI:74411"/>
        <dbReference type="ChEBI" id="CHEBI:74497"/>
        <dbReference type="EC" id="2.1.1.192"/>
    </reaction>
</comment>
<comment type="catalytic activity">
    <reaction evidence="1">
        <text>adenosine(37) in tRNA + 2 reduced [2Fe-2S]-[ferredoxin] + 2 S-adenosyl-L-methionine = 2-methyladenosine(37) in tRNA + 5'-deoxyadenosine + L-methionine + 2 oxidized [2Fe-2S]-[ferredoxin] + S-adenosyl-L-homocysteine</text>
        <dbReference type="Rhea" id="RHEA:43332"/>
        <dbReference type="Rhea" id="RHEA-COMP:10000"/>
        <dbReference type="Rhea" id="RHEA-COMP:10001"/>
        <dbReference type="Rhea" id="RHEA-COMP:10162"/>
        <dbReference type="Rhea" id="RHEA-COMP:10485"/>
        <dbReference type="ChEBI" id="CHEBI:17319"/>
        <dbReference type="ChEBI" id="CHEBI:33737"/>
        <dbReference type="ChEBI" id="CHEBI:33738"/>
        <dbReference type="ChEBI" id="CHEBI:57844"/>
        <dbReference type="ChEBI" id="CHEBI:57856"/>
        <dbReference type="ChEBI" id="CHEBI:59789"/>
        <dbReference type="ChEBI" id="CHEBI:74411"/>
        <dbReference type="ChEBI" id="CHEBI:74497"/>
        <dbReference type="EC" id="2.1.1.192"/>
    </reaction>
</comment>
<comment type="cofactor">
    <cofactor evidence="1">
        <name>[4Fe-4S] cluster</name>
        <dbReference type="ChEBI" id="CHEBI:49883"/>
    </cofactor>
    <text evidence="1">Binds 1 [4Fe-4S] cluster. The cluster is coordinated with 3 cysteines and an exchangeable S-adenosyl-L-methionine.</text>
</comment>
<comment type="subcellular location">
    <subcellularLocation>
        <location evidence="1">Cytoplasm</location>
    </subcellularLocation>
</comment>
<comment type="miscellaneous">
    <text evidence="1">Reaction proceeds by a ping-pong mechanism involving intermediate methylation of a conserved cysteine residue.</text>
</comment>
<comment type="similarity">
    <text evidence="1">Belongs to the radical SAM superfamily. RlmN family.</text>
</comment>
<name>RLMN_CAUSK</name>
<accession>B0T387</accession>
<feature type="chain" id="PRO_0000350101" description="Dual-specificity RNA methyltransferase RlmN">
    <location>
        <begin position="1"/>
        <end position="404"/>
    </location>
</feature>
<feature type="domain" description="Radical SAM core" evidence="2">
    <location>
        <begin position="126"/>
        <end position="358"/>
    </location>
</feature>
<feature type="active site" description="Proton acceptor" evidence="1">
    <location>
        <position position="119"/>
    </location>
</feature>
<feature type="active site" description="S-methylcysteine intermediate" evidence="1">
    <location>
        <position position="369"/>
    </location>
</feature>
<feature type="binding site" evidence="1">
    <location>
        <position position="140"/>
    </location>
    <ligand>
        <name>[4Fe-4S] cluster</name>
        <dbReference type="ChEBI" id="CHEBI:49883"/>
        <note>4Fe-4S-S-AdoMet</note>
    </ligand>
</feature>
<feature type="binding site" evidence="1">
    <location>
        <position position="144"/>
    </location>
    <ligand>
        <name>[4Fe-4S] cluster</name>
        <dbReference type="ChEBI" id="CHEBI:49883"/>
        <note>4Fe-4S-S-AdoMet</note>
    </ligand>
</feature>
<feature type="binding site" evidence="1">
    <location>
        <position position="147"/>
    </location>
    <ligand>
        <name>[4Fe-4S] cluster</name>
        <dbReference type="ChEBI" id="CHEBI:49883"/>
        <note>4Fe-4S-S-AdoMet</note>
    </ligand>
</feature>
<feature type="binding site" evidence="1">
    <location>
        <begin position="195"/>
        <end position="196"/>
    </location>
    <ligand>
        <name>S-adenosyl-L-methionine</name>
        <dbReference type="ChEBI" id="CHEBI:59789"/>
    </ligand>
</feature>
<feature type="binding site" evidence="1">
    <location>
        <position position="227"/>
    </location>
    <ligand>
        <name>S-adenosyl-L-methionine</name>
        <dbReference type="ChEBI" id="CHEBI:59789"/>
    </ligand>
</feature>
<feature type="binding site" evidence="1">
    <location>
        <begin position="249"/>
        <end position="251"/>
    </location>
    <ligand>
        <name>S-adenosyl-L-methionine</name>
        <dbReference type="ChEBI" id="CHEBI:59789"/>
    </ligand>
</feature>
<feature type="binding site" evidence="1">
    <location>
        <position position="326"/>
    </location>
    <ligand>
        <name>S-adenosyl-L-methionine</name>
        <dbReference type="ChEBI" id="CHEBI:59789"/>
    </ligand>
</feature>
<feature type="disulfide bond" description="(transient)" evidence="1">
    <location>
        <begin position="133"/>
        <end position="369"/>
    </location>
</feature>
<organism>
    <name type="scientific">Caulobacter sp. (strain K31)</name>
    <dbReference type="NCBI Taxonomy" id="366602"/>
    <lineage>
        <taxon>Bacteria</taxon>
        <taxon>Pseudomonadati</taxon>
        <taxon>Pseudomonadota</taxon>
        <taxon>Alphaproteobacteria</taxon>
        <taxon>Caulobacterales</taxon>
        <taxon>Caulobacteraceae</taxon>
        <taxon>Caulobacter</taxon>
    </lineage>
</organism>